<accession>P44619</accession>
<keyword id="KW-0067">ATP-binding</keyword>
<keyword id="KW-0347">Helicase</keyword>
<keyword id="KW-0378">Hydrolase</keyword>
<keyword id="KW-0547">Nucleotide-binding</keyword>
<keyword id="KW-1185">Reference proteome</keyword>
<keyword id="KW-0694">RNA-binding</keyword>
<keyword id="KW-0804">Transcription</keyword>
<keyword id="KW-0805">Transcription regulation</keyword>
<keyword id="KW-0806">Transcription termination</keyword>
<sequence>MHLTELKNTPVSDLVKLGEEQMGLENLARLRKQDIVFAILKQHAKSGEDIFGGGVLEILPDGFGFLRSADSSYLAGPDDIYVSPSQIRRFNLQTGDKIEGKIRPPKEGERYFALLKVDQVNDDKPEVSRSKILFENLTPLHANSRLRMERGNGSTEDLTARILDLASPIGKGQRGLIVAPPKAGKTMLLQNIAQSITHNYPDVELIVLLIDERPEEVTEMQRSVKGEVIASTFDEPATRHVQVAEMVIEKAKRSVEHKKDVVILLDSITRLARAYNTVTPASGKILSGGVDANALHRPKRFFGAARNVEEGGSLTIIATALVDTGSKMDEVIFEEFKGTGNMELHLSRKIAERRVFPAIDFKRSGTRKEDLLTTADELQKMWILRKILNPMDEVDAMEFLIDKLMMAKTNEEFFEVMKRS</sequence>
<dbReference type="EC" id="3.6.4.-" evidence="1"/>
<dbReference type="EMBL" id="L42023">
    <property type="protein sequence ID" value="AAC21959.1"/>
    <property type="molecule type" value="Genomic_DNA"/>
</dbReference>
<dbReference type="PIR" id="B64060">
    <property type="entry name" value="B64060"/>
</dbReference>
<dbReference type="RefSeq" id="NP_438462.1">
    <property type="nucleotide sequence ID" value="NC_000907.1"/>
</dbReference>
<dbReference type="SMR" id="P44619"/>
<dbReference type="STRING" id="71421.HI_0295"/>
<dbReference type="EnsemblBacteria" id="AAC21959">
    <property type="protein sequence ID" value="AAC21959"/>
    <property type="gene ID" value="HI_0295"/>
</dbReference>
<dbReference type="KEGG" id="hin:HI_0295"/>
<dbReference type="PATRIC" id="fig|71421.8.peg.311"/>
<dbReference type="eggNOG" id="COG1158">
    <property type="taxonomic scope" value="Bacteria"/>
</dbReference>
<dbReference type="HOGENOM" id="CLU_016377_4_3_6"/>
<dbReference type="OrthoDB" id="9805197at2"/>
<dbReference type="PhylomeDB" id="P44619"/>
<dbReference type="BioCyc" id="HINF71421:G1GJ1-313-MONOMER"/>
<dbReference type="Proteomes" id="UP000000579">
    <property type="component" value="Chromosome"/>
</dbReference>
<dbReference type="GO" id="GO:0005829">
    <property type="term" value="C:cytosol"/>
    <property type="evidence" value="ECO:0007669"/>
    <property type="project" value="UniProtKB-ARBA"/>
</dbReference>
<dbReference type="GO" id="GO:0005524">
    <property type="term" value="F:ATP binding"/>
    <property type="evidence" value="ECO:0007669"/>
    <property type="project" value="UniProtKB-UniRule"/>
</dbReference>
<dbReference type="GO" id="GO:0016887">
    <property type="term" value="F:ATP hydrolysis activity"/>
    <property type="evidence" value="ECO:0007669"/>
    <property type="project" value="InterPro"/>
</dbReference>
<dbReference type="GO" id="GO:0008186">
    <property type="term" value="F:ATP-dependent activity, acting on RNA"/>
    <property type="evidence" value="ECO:0007669"/>
    <property type="project" value="InterPro"/>
</dbReference>
<dbReference type="GO" id="GO:0004386">
    <property type="term" value="F:helicase activity"/>
    <property type="evidence" value="ECO:0007669"/>
    <property type="project" value="UniProtKB-UniRule"/>
</dbReference>
<dbReference type="GO" id="GO:0003723">
    <property type="term" value="F:RNA binding"/>
    <property type="evidence" value="ECO:0007669"/>
    <property type="project" value="UniProtKB-UniRule"/>
</dbReference>
<dbReference type="GO" id="GO:0006353">
    <property type="term" value="P:DNA-templated transcription termination"/>
    <property type="evidence" value="ECO:0000318"/>
    <property type="project" value="GO_Central"/>
</dbReference>
<dbReference type="CDD" id="cd04459">
    <property type="entry name" value="Rho_CSD"/>
    <property type="match status" value="1"/>
</dbReference>
<dbReference type="CDD" id="cd01128">
    <property type="entry name" value="rho_factor_C"/>
    <property type="match status" value="1"/>
</dbReference>
<dbReference type="FunFam" id="1.10.720.10:FF:000001">
    <property type="entry name" value="Transcription termination factor Rho"/>
    <property type="match status" value="1"/>
</dbReference>
<dbReference type="FunFam" id="2.40.50.140:FF:000010">
    <property type="entry name" value="Transcription termination factor Rho"/>
    <property type="match status" value="1"/>
</dbReference>
<dbReference type="FunFam" id="3.40.50.300:FF:000072">
    <property type="entry name" value="Transcription termination factor Rho"/>
    <property type="match status" value="1"/>
</dbReference>
<dbReference type="Gene3D" id="1.10.720.10">
    <property type="match status" value="1"/>
</dbReference>
<dbReference type="Gene3D" id="2.40.50.140">
    <property type="entry name" value="Nucleic acid-binding proteins"/>
    <property type="match status" value="1"/>
</dbReference>
<dbReference type="Gene3D" id="3.40.50.300">
    <property type="entry name" value="P-loop containing nucleotide triphosphate hydrolases"/>
    <property type="match status" value="1"/>
</dbReference>
<dbReference type="HAMAP" id="MF_01884">
    <property type="entry name" value="Rho"/>
    <property type="match status" value="1"/>
</dbReference>
<dbReference type="InterPro" id="IPR003593">
    <property type="entry name" value="AAA+_ATPase"/>
</dbReference>
<dbReference type="InterPro" id="IPR000194">
    <property type="entry name" value="ATPase_F1/V1/A1_a/bsu_nucl-bd"/>
</dbReference>
<dbReference type="InterPro" id="IPR011129">
    <property type="entry name" value="CSD"/>
</dbReference>
<dbReference type="InterPro" id="IPR012340">
    <property type="entry name" value="NA-bd_OB-fold"/>
</dbReference>
<dbReference type="InterPro" id="IPR027417">
    <property type="entry name" value="P-loop_NTPase"/>
</dbReference>
<dbReference type="InterPro" id="IPR011112">
    <property type="entry name" value="Rho-like_N"/>
</dbReference>
<dbReference type="InterPro" id="IPR041703">
    <property type="entry name" value="Rho_factor_ATP-bd"/>
</dbReference>
<dbReference type="InterPro" id="IPR036269">
    <property type="entry name" value="Rho_N_sf"/>
</dbReference>
<dbReference type="InterPro" id="IPR011113">
    <property type="entry name" value="Rho_RNA-bd"/>
</dbReference>
<dbReference type="InterPro" id="IPR004665">
    <property type="entry name" value="Term_rho"/>
</dbReference>
<dbReference type="NCBIfam" id="NF006886">
    <property type="entry name" value="PRK09376.1"/>
    <property type="match status" value="1"/>
</dbReference>
<dbReference type="NCBIfam" id="TIGR00767">
    <property type="entry name" value="rho"/>
    <property type="match status" value="1"/>
</dbReference>
<dbReference type="PANTHER" id="PTHR46425">
    <property type="entry name" value="TRANSCRIPTION TERMINATION FACTOR RHO"/>
    <property type="match status" value="1"/>
</dbReference>
<dbReference type="PANTHER" id="PTHR46425:SF1">
    <property type="entry name" value="TRANSCRIPTION TERMINATION FACTOR RHO"/>
    <property type="match status" value="1"/>
</dbReference>
<dbReference type="Pfam" id="PF00006">
    <property type="entry name" value="ATP-synt_ab"/>
    <property type="match status" value="1"/>
</dbReference>
<dbReference type="Pfam" id="PF07498">
    <property type="entry name" value="Rho_N"/>
    <property type="match status" value="1"/>
</dbReference>
<dbReference type="Pfam" id="PF07497">
    <property type="entry name" value="Rho_RNA_bind"/>
    <property type="match status" value="1"/>
</dbReference>
<dbReference type="SMART" id="SM00382">
    <property type="entry name" value="AAA"/>
    <property type="match status" value="1"/>
</dbReference>
<dbReference type="SMART" id="SM00357">
    <property type="entry name" value="CSP"/>
    <property type="match status" value="1"/>
</dbReference>
<dbReference type="SMART" id="SM00959">
    <property type="entry name" value="Rho_N"/>
    <property type="match status" value="1"/>
</dbReference>
<dbReference type="SUPFAM" id="SSF50249">
    <property type="entry name" value="Nucleic acid-binding proteins"/>
    <property type="match status" value="1"/>
</dbReference>
<dbReference type="SUPFAM" id="SSF52540">
    <property type="entry name" value="P-loop containing nucleoside triphosphate hydrolases"/>
    <property type="match status" value="1"/>
</dbReference>
<dbReference type="SUPFAM" id="SSF68912">
    <property type="entry name" value="Rho N-terminal domain-like"/>
    <property type="match status" value="1"/>
</dbReference>
<dbReference type="PROSITE" id="PS51856">
    <property type="entry name" value="RHO_RNA_BD"/>
    <property type="match status" value="1"/>
</dbReference>
<feature type="chain" id="PRO_0000188965" description="Transcription termination factor Rho">
    <location>
        <begin position="1"/>
        <end position="420"/>
    </location>
</feature>
<feature type="domain" description="Rho RNA-BD" evidence="2">
    <location>
        <begin position="49"/>
        <end position="124"/>
    </location>
</feature>
<feature type="binding site" evidence="1">
    <location>
        <begin position="170"/>
        <end position="175"/>
    </location>
    <ligand>
        <name>ATP</name>
        <dbReference type="ChEBI" id="CHEBI:30616"/>
    </ligand>
</feature>
<feature type="binding site" evidence="1">
    <location>
        <begin position="182"/>
        <end position="187"/>
    </location>
    <ligand>
        <name>ATP</name>
        <dbReference type="ChEBI" id="CHEBI:30616"/>
    </ligand>
</feature>
<feature type="binding site" evidence="1">
    <location>
        <position position="213"/>
    </location>
    <ligand>
        <name>ATP</name>
        <dbReference type="ChEBI" id="CHEBI:30616"/>
    </ligand>
</feature>
<comment type="function">
    <text evidence="1">Facilitates transcription termination by a mechanism that involves Rho binding to the nascent RNA, activation of Rho's RNA-dependent ATPase activity, and release of the mRNA from the DNA template.</text>
</comment>
<comment type="subunit">
    <text evidence="1">Homohexamer. The homohexamer assembles into an open ring structure.</text>
</comment>
<comment type="similarity">
    <text evidence="1">Belongs to the Rho family.</text>
</comment>
<gene>
    <name evidence="1" type="primary">rho</name>
    <name type="ordered locus">HI_0295</name>
</gene>
<evidence type="ECO:0000255" key="1">
    <source>
        <dbReference type="HAMAP-Rule" id="MF_01884"/>
    </source>
</evidence>
<evidence type="ECO:0000255" key="2">
    <source>
        <dbReference type="PROSITE-ProRule" id="PRU01203"/>
    </source>
</evidence>
<protein>
    <recommendedName>
        <fullName evidence="1">Transcription termination factor Rho</fullName>
        <ecNumber evidence="1">3.6.4.-</ecNumber>
    </recommendedName>
    <alternativeName>
        <fullName evidence="1">ATP-dependent helicase Rho</fullName>
    </alternativeName>
</protein>
<name>RHO_HAEIN</name>
<proteinExistence type="inferred from homology"/>
<organism>
    <name type="scientific">Haemophilus influenzae (strain ATCC 51907 / DSM 11121 / KW20 / Rd)</name>
    <dbReference type="NCBI Taxonomy" id="71421"/>
    <lineage>
        <taxon>Bacteria</taxon>
        <taxon>Pseudomonadati</taxon>
        <taxon>Pseudomonadota</taxon>
        <taxon>Gammaproteobacteria</taxon>
        <taxon>Pasteurellales</taxon>
        <taxon>Pasteurellaceae</taxon>
        <taxon>Haemophilus</taxon>
    </lineage>
</organism>
<reference key="1">
    <citation type="journal article" date="1995" name="Science">
        <title>Whole-genome random sequencing and assembly of Haemophilus influenzae Rd.</title>
        <authorList>
            <person name="Fleischmann R.D."/>
            <person name="Adams M.D."/>
            <person name="White O."/>
            <person name="Clayton R.A."/>
            <person name="Kirkness E.F."/>
            <person name="Kerlavage A.R."/>
            <person name="Bult C.J."/>
            <person name="Tomb J.-F."/>
            <person name="Dougherty B.A."/>
            <person name="Merrick J.M."/>
            <person name="McKenney K."/>
            <person name="Sutton G.G."/>
            <person name="FitzHugh W."/>
            <person name="Fields C.A."/>
            <person name="Gocayne J.D."/>
            <person name="Scott J.D."/>
            <person name="Shirley R."/>
            <person name="Liu L.-I."/>
            <person name="Glodek A."/>
            <person name="Kelley J.M."/>
            <person name="Weidman J.F."/>
            <person name="Phillips C.A."/>
            <person name="Spriggs T."/>
            <person name="Hedblom E."/>
            <person name="Cotton M.D."/>
            <person name="Utterback T.R."/>
            <person name="Hanna M.C."/>
            <person name="Nguyen D.T."/>
            <person name="Saudek D.M."/>
            <person name="Brandon R.C."/>
            <person name="Fine L.D."/>
            <person name="Fritchman J.L."/>
            <person name="Fuhrmann J.L."/>
            <person name="Geoghagen N.S.M."/>
            <person name="Gnehm C.L."/>
            <person name="McDonald L.A."/>
            <person name="Small K.V."/>
            <person name="Fraser C.M."/>
            <person name="Smith H.O."/>
            <person name="Venter J.C."/>
        </authorList>
    </citation>
    <scope>NUCLEOTIDE SEQUENCE [LARGE SCALE GENOMIC DNA]</scope>
    <source>
        <strain>ATCC 51907 / DSM 11121 / KW20 / Rd</strain>
    </source>
</reference>